<feature type="chain" id="PRO_1000017678" description="Adenine deaminase">
    <location>
        <begin position="1"/>
        <end position="316"/>
    </location>
</feature>
<feature type="active site" description="Proton donor" evidence="1">
    <location>
        <position position="197"/>
    </location>
</feature>
<feature type="binding site" evidence="1">
    <location>
        <position position="14"/>
    </location>
    <ligand>
        <name>Zn(2+)</name>
        <dbReference type="ChEBI" id="CHEBI:29105"/>
        <note>catalytic</note>
    </ligand>
</feature>
<feature type="binding site" evidence="1">
    <location>
        <position position="16"/>
    </location>
    <ligand>
        <name>Zn(2+)</name>
        <dbReference type="ChEBI" id="CHEBI:29105"/>
        <note>catalytic</note>
    </ligand>
</feature>
<feature type="binding site" evidence="1">
    <location>
        <position position="194"/>
    </location>
    <ligand>
        <name>Zn(2+)</name>
        <dbReference type="ChEBI" id="CHEBI:29105"/>
        <note>catalytic</note>
    </ligand>
</feature>
<feature type="binding site" evidence="1">
    <location>
        <position position="275"/>
    </location>
    <ligand>
        <name>Zn(2+)</name>
        <dbReference type="ChEBI" id="CHEBI:29105"/>
        <note>catalytic</note>
    </ligand>
</feature>
<feature type="binding site" evidence="1">
    <location>
        <position position="276"/>
    </location>
    <ligand>
        <name>substrate</name>
    </ligand>
</feature>
<feature type="site" description="Important for catalytic activity" evidence="1">
    <location>
        <position position="218"/>
    </location>
</feature>
<proteinExistence type="inferred from homology"/>
<name>ADE_PSEAB</name>
<comment type="function">
    <text evidence="1">Catalyzes the hydrolytic deamination of adenine to hypoxanthine. Plays an important role in the purine salvage pathway and in nitrogen catabolism.</text>
</comment>
<comment type="catalytic activity">
    <reaction evidence="1">
        <text>adenine + H2O + H(+) = hypoxanthine + NH4(+)</text>
        <dbReference type="Rhea" id="RHEA:23688"/>
        <dbReference type="ChEBI" id="CHEBI:15377"/>
        <dbReference type="ChEBI" id="CHEBI:15378"/>
        <dbReference type="ChEBI" id="CHEBI:16708"/>
        <dbReference type="ChEBI" id="CHEBI:17368"/>
        <dbReference type="ChEBI" id="CHEBI:28938"/>
        <dbReference type="EC" id="3.5.4.2"/>
    </reaction>
</comment>
<comment type="cofactor">
    <cofactor evidence="1">
        <name>Zn(2+)</name>
        <dbReference type="ChEBI" id="CHEBI:29105"/>
    </cofactor>
    <text evidence="1">Binds 1 zinc ion per subunit.</text>
</comment>
<comment type="similarity">
    <text evidence="1">Belongs to the metallo-dependent hydrolases superfamily. Adenosine and AMP deaminases family. Adenine deaminase type 2 subfamily.</text>
</comment>
<reference key="1">
    <citation type="journal article" date="2006" name="Genome Biol.">
        <title>Genomic analysis reveals that Pseudomonas aeruginosa virulence is combinatorial.</title>
        <authorList>
            <person name="Lee D.G."/>
            <person name="Urbach J.M."/>
            <person name="Wu G."/>
            <person name="Liberati N.T."/>
            <person name="Feinbaum R.L."/>
            <person name="Miyata S."/>
            <person name="Diggins L.T."/>
            <person name="He J."/>
            <person name="Saucier M."/>
            <person name="Deziel E."/>
            <person name="Friedman L."/>
            <person name="Li L."/>
            <person name="Grills G."/>
            <person name="Montgomery K."/>
            <person name="Kucherlapati R."/>
            <person name="Rahme L.G."/>
            <person name="Ausubel F.M."/>
        </authorList>
    </citation>
    <scope>NUCLEOTIDE SEQUENCE [LARGE SCALE GENOMIC DNA]</scope>
    <source>
        <strain>UCBPP-PA14</strain>
    </source>
</reference>
<gene>
    <name type="ordered locus">PA14_01830</name>
</gene>
<organism>
    <name type="scientific">Pseudomonas aeruginosa (strain UCBPP-PA14)</name>
    <dbReference type="NCBI Taxonomy" id="208963"/>
    <lineage>
        <taxon>Bacteria</taxon>
        <taxon>Pseudomonadati</taxon>
        <taxon>Pseudomonadota</taxon>
        <taxon>Gammaproteobacteria</taxon>
        <taxon>Pseudomonadales</taxon>
        <taxon>Pseudomonadaceae</taxon>
        <taxon>Pseudomonas</taxon>
    </lineage>
</organism>
<protein>
    <recommendedName>
        <fullName evidence="1">Adenine deaminase</fullName>
        <shortName evidence="1">ADE</shortName>
        <ecNumber evidence="1">3.5.4.2</ecNumber>
    </recommendedName>
    <alternativeName>
        <fullName evidence="1">Adenine aminohydrolase</fullName>
        <shortName evidence="1">AAH</shortName>
    </alternativeName>
</protein>
<keyword id="KW-0378">Hydrolase</keyword>
<keyword id="KW-0479">Metal-binding</keyword>
<keyword id="KW-0546">Nucleotide metabolism</keyword>
<keyword id="KW-0862">Zinc</keyword>
<dbReference type="EC" id="3.5.4.2" evidence="1"/>
<dbReference type="EMBL" id="CP000438">
    <property type="protein sequence ID" value="ABJ15105.1"/>
    <property type="molecule type" value="Genomic_DNA"/>
</dbReference>
<dbReference type="RefSeq" id="WP_003083850.1">
    <property type="nucleotide sequence ID" value="NZ_CP034244.1"/>
</dbReference>
<dbReference type="SMR" id="Q02UT0"/>
<dbReference type="KEGG" id="pau:PA14_01830"/>
<dbReference type="PseudoCAP" id="PA14_01830"/>
<dbReference type="HOGENOM" id="CLU_039228_7_0_6"/>
<dbReference type="BioCyc" id="PAER208963:G1G74-154-MONOMER"/>
<dbReference type="Proteomes" id="UP000000653">
    <property type="component" value="Chromosome"/>
</dbReference>
<dbReference type="GO" id="GO:0005829">
    <property type="term" value="C:cytosol"/>
    <property type="evidence" value="ECO:0007669"/>
    <property type="project" value="TreeGrafter"/>
</dbReference>
<dbReference type="GO" id="GO:0000034">
    <property type="term" value="F:adenine deaminase activity"/>
    <property type="evidence" value="ECO:0007669"/>
    <property type="project" value="UniProtKB-UniRule"/>
</dbReference>
<dbReference type="GO" id="GO:0008270">
    <property type="term" value="F:zinc ion binding"/>
    <property type="evidence" value="ECO:0007669"/>
    <property type="project" value="UniProtKB-UniRule"/>
</dbReference>
<dbReference type="GO" id="GO:0006146">
    <property type="term" value="P:adenine catabolic process"/>
    <property type="evidence" value="ECO:0007669"/>
    <property type="project" value="UniProtKB-UniRule"/>
</dbReference>
<dbReference type="GO" id="GO:0043103">
    <property type="term" value="P:hypoxanthine salvage"/>
    <property type="evidence" value="ECO:0007669"/>
    <property type="project" value="UniProtKB-UniRule"/>
</dbReference>
<dbReference type="GO" id="GO:0009117">
    <property type="term" value="P:nucleotide metabolic process"/>
    <property type="evidence" value="ECO:0007669"/>
    <property type="project" value="UniProtKB-KW"/>
</dbReference>
<dbReference type="CDD" id="cd01320">
    <property type="entry name" value="ADA"/>
    <property type="match status" value="1"/>
</dbReference>
<dbReference type="FunFam" id="3.20.20.140:FF:000039">
    <property type="entry name" value="Adenine deaminase"/>
    <property type="match status" value="1"/>
</dbReference>
<dbReference type="Gene3D" id="3.20.20.140">
    <property type="entry name" value="Metal-dependent hydrolases"/>
    <property type="match status" value="1"/>
</dbReference>
<dbReference type="HAMAP" id="MF_01962">
    <property type="entry name" value="Adenine_deaminase"/>
    <property type="match status" value="1"/>
</dbReference>
<dbReference type="InterPro" id="IPR001365">
    <property type="entry name" value="A_deaminase_dom"/>
</dbReference>
<dbReference type="InterPro" id="IPR028892">
    <property type="entry name" value="ADE"/>
</dbReference>
<dbReference type="InterPro" id="IPR006330">
    <property type="entry name" value="Ado/ade_deaminase"/>
</dbReference>
<dbReference type="InterPro" id="IPR032466">
    <property type="entry name" value="Metal_Hydrolase"/>
</dbReference>
<dbReference type="NCBIfam" id="TIGR01430">
    <property type="entry name" value="aden_deam"/>
    <property type="match status" value="1"/>
</dbReference>
<dbReference type="NCBIfam" id="NF006850">
    <property type="entry name" value="PRK09358.1-6"/>
    <property type="match status" value="1"/>
</dbReference>
<dbReference type="PANTHER" id="PTHR43114">
    <property type="entry name" value="ADENINE DEAMINASE"/>
    <property type="match status" value="1"/>
</dbReference>
<dbReference type="PANTHER" id="PTHR43114:SF6">
    <property type="entry name" value="ADENINE DEAMINASE"/>
    <property type="match status" value="1"/>
</dbReference>
<dbReference type="Pfam" id="PF00962">
    <property type="entry name" value="A_deaminase"/>
    <property type="match status" value="1"/>
</dbReference>
<dbReference type="SUPFAM" id="SSF51556">
    <property type="entry name" value="Metallo-dependent hydrolases"/>
    <property type="match status" value="1"/>
</dbReference>
<accession>Q02UT0</accession>
<evidence type="ECO:0000255" key="1">
    <source>
        <dbReference type="HAMAP-Rule" id="MF_01962"/>
    </source>
</evidence>
<sequence length="316" mass="36135">MYEWLNALPKAELHLHLEGTLEPELLFALAERNRIALPWNDVETLRKAYAFNNLQEFLDLYYAGADVLRTEQDFYDLTWAYLQKCKAQNVVHVEPFFDPQTHTDRGIPFEVVLAGIRAALQDGEKLLGIRHGLILSFLRHLSEEQAQKTLDQALPFRDAFIAVGLDSSEVGHPPSKFQRVFDRARSEGFLTVAHAGEEGPPEYIWEALDLLKVERIDHGVRAFEDERLMRRLIDEQIPLTVCPLSNTKLCVFDDMSQHTILDMLERGVKVTVNSDDPAYFGGYVTENFHALQQSLGMTEEQARRLAQNSLDARLVK</sequence>